<reference key="1">
    <citation type="journal article" date="2005" name="PLoS Genet.">
        <title>Life in hot carbon monoxide: the complete genome sequence of Carboxydothermus hydrogenoformans Z-2901.</title>
        <authorList>
            <person name="Wu M."/>
            <person name="Ren Q."/>
            <person name="Durkin A.S."/>
            <person name="Daugherty S.C."/>
            <person name="Brinkac L.M."/>
            <person name="Dodson R.J."/>
            <person name="Madupu R."/>
            <person name="Sullivan S.A."/>
            <person name="Kolonay J.F."/>
            <person name="Nelson W.C."/>
            <person name="Tallon L.J."/>
            <person name="Jones K.M."/>
            <person name="Ulrich L.E."/>
            <person name="Gonzalez J.M."/>
            <person name="Zhulin I.B."/>
            <person name="Robb F.T."/>
            <person name="Eisen J.A."/>
        </authorList>
    </citation>
    <scope>NUCLEOTIDE SEQUENCE [LARGE SCALE GENOMIC DNA]</scope>
    <source>
        <strain>ATCC BAA-161 / DSM 6008 / Z-2901</strain>
    </source>
</reference>
<comment type="function">
    <text evidence="1">Protease subunit of a proteasome-like degradation complex believed to be a general protein degrading machinery.</text>
</comment>
<comment type="catalytic activity">
    <reaction evidence="1">
        <text>ATP-dependent cleavage of peptide bonds with broad specificity.</text>
        <dbReference type="EC" id="3.4.25.2"/>
    </reaction>
</comment>
<comment type="activity regulation">
    <text evidence="1">Allosterically activated by HslU binding.</text>
</comment>
<comment type="subunit">
    <text evidence="1">A double ring-shaped homohexamer of HslV is capped on each side by a ring-shaped HslU homohexamer. The assembly of the HslU/HslV complex is dependent on binding of ATP.</text>
</comment>
<comment type="subcellular location">
    <subcellularLocation>
        <location evidence="1">Cytoplasm</location>
    </subcellularLocation>
</comment>
<comment type="similarity">
    <text evidence="1">Belongs to the peptidase T1B family. HslV subfamily.</text>
</comment>
<proteinExistence type="inferred from homology"/>
<feature type="chain" id="PRO_0000336766" description="ATP-dependent protease subunit HslV">
    <location>
        <begin position="1"/>
        <end position="179"/>
    </location>
</feature>
<feature type="active site" evidence="1">
    <location>
        <position position="5"/>
    </location>
</feature>
<feature type="binding site" evidence="1">
    <location>
        <position position="164"/>
    </location>
    <ligand>
        <name>Na(+)</name>
        <dbReference type="ChEBI" id="CHEBI:29101"/>
    </ligand>
</feature>
<feature type="binding site" evidence="1">
    <location>
        <position position="167"/>
    </location>
    <ligand>
        <name>Na(+)</name>
        <dbReference type="ChEBI" id="CHEBI:29101"/>
    </ligand>
</feature>
<organism>
    <name type="scientific">Carboxydothermus hydrogenoformans (strain ATCC BAA-161 / DSM 6008 / Z-2901)</name>
    <dbReference type="NCBI Taxonomy" id="246194"/>
    <lineage>
        <taxon>Bacteria</taxon>
        <taxon>Bacillati</taxon>
        <taxon>Bacillota</taxon>
        <taxon>Clostridia</taxon>
        <taxon>Thermoanaerobacterales</taxon>
        <taxon>Thermoanaerobacteraceae</taxon>
        <taxon>Carboxydothermus</taxon>
    </lineage>
</organism>
<keyword id="KW-0021">Allosteric enzyme</keyword>
<keyword id="KW-0963">Cytoplasm</keyword>
<keyword id="KW-0378">Hydrolase</keyword>
<keyword id="KW-0479">Metal-binding</keyword>
<keyword id="KW-0645">Protease</keyword>
<keyword id="KW-1185">Reference proteome</keyword>
<keyword id="KW-0915">Sodium</keyword>
<keyword id="KW-0888">Threonine protease</keyword>
<gene>
    <name evidence="1" type="primary">hslV</name>
    <name type="ordered locus">CHY_1791</name>
</gene>
<evidence type="ECO:0000255" key="1">
    <source>
        <dbReference type="HAMAP-Rule" id="MF_00248"/>
    </source>
</evidence>
<dbReference type="EC" id="3.4.25.2" evidence="1"/>
<dbReference type="EMBL" id="CP000141">
    <property type="protein sequence ID" value="ABB14425.1"/>
    <property type="molecule type" value="Genomic_DNA"/>
</dbReference>
<dbReference type="RefSeq" id="WP_011344685.1">
    <property type="nucleotide sequence ID" value="NC_007503.1"/>
</dbReference>
<dbReference type="SMR" id="Q3AB73"/>
<dbReference type="FunCoup" id="Q3AB73">
    <property type="interactions" value="94"/>
</dbReference>
<dbReference type="STRING" id="246194.CHY_1791"/>
<dbReference type="MEROPS" id="T01.006"/>
<dbReference type="KEGG" id="chy:CHY_1791"/>
<dbReference type="eggNOG" id="COG5405">
    <property type="taxonomic scope" value="Bacteria"/>
</dbReference>
<dbReference type="HOGENOM" id="CLU_093872_1_0_9"/>
<dbReference type="InParanoid" id="Q3AB73"/>
<dbReference type="OrthoDB" id="9804884at2"/>
<dbReference type="Proteomes" id="UP000002706">
    <property type="component" value="Chromosome"/>
</dbReference>
<dbReference type="GO" id="GO:0009376">
    <property type="term" value="C:HslUV protease complex"/>
    <property type="evidence" value="ECO:0007669"/>
    <property type="project" value="UniProtKB-UniRule"/>
</dbReference>
<dbReference type="GO" id="GO:0005839">
    <property type="term" value="C:proteasome core complex"/>
    <property type="evidence" value="ECO:0007669"/>
    <property type="project" value="InterPro"/>
</dbReference>
<dbReference type="GO" id="GO:0046872">
    <property type="term" value="F:metal ion binding"/>
    <property type="evidence" value="ECO:0007669"/>
    <property type="project" value="UniProtKB-KW"/>
</dbReference>
<dbReference type="GO" id="GO:0004298">
    <property type="term" value="F:threonine-type endopeptidase activity"/>
    <property type="evidence" value="ECO:0007669"/>
    <property type="project" value="UniProtKB-KW"/>
</dbReference>
<dbReference type="GO" id="GO:0051603">
    <property type="term" value="P:proteolysis involved in protein catabolic process"/>
    <property type="evidence" value="ECO:0007669"/>
    <property type="project" value="InterPro"/>
</dbReference>
<dbReference type="CDD" id="cd01913">
    <property type="entry name" value="protease_HslV"/>
    <property type="match status" value="1"/>
</dbReference>
<dbReference type="Gene3D" id="3.60.20.10">
    <property type="entry name" value="Glutamine Phosphoribosylpyrophosphate, subunit 1, domain 1"/>
    <property type="match status" value="1"/>
</dbReference>
<dbReference type="HAMAP" id="MF_00248">
    <property type="entry name" value="HslV"/>
    <property type="match status" value="1"/>
</dbReference>
<dbReference type="InterPro" id="IPR022281">
    <property type="entry name" value="ATP-dep_Prtase_HsIV_su"/>
</dbReference>
<dbReference type="InterPro" id="IPR029055">
    <property type="entry name" value="Ntn_hydrolases_N"/>
</dbReference>
<dbReference type="InterPro" id="IPR001353">
    <property type="entry name" value="Proteasome_sua/b"/>
</dbReference>
<dbReference type="InterPro" id="IPR023333">
    <property type="entry name" value="Proteasome_suB-type"/>
</dbReference>
<dbReference type="NCBIfam" id="TIGR03692">
    <property type="entry name" value="ATP_dep_HslV"/>
    <property type="match status" value="1"/>
</dbReference>
<dbReference type="NCBIfam" id="NF003964">
    <property type="entry name" value="PRK05456.1"/>
    <property type="match status" value="1"/>
</dbReference>
<dbReference type="PANTHER" id="PTHR32194:SF0">
    <property type="entry name" value="ATP-DEPENDENT PROTEASE SUBUNIT HSLV"/>
    <property type="match status" value="1"/>
</dbReference>
<dbReference type="PANTHER" id="PTHR32194">
    <property type="entry name" value="METALLOPROTEASE TLDD"/>
    <property type="match status" value="1"/>
</dbReference>
<dbReference type="Pfam" id="PF00227">
    <property type="entry name" value="Proteasome"/>
    <property type="match status" value="1"/>
</dbReference>
<dbReference type="PIRSF" id="PIRSF039093">
    <property type="entry name" value="HslV"/>
    <property type="match status" value="1"/>
</dbReference>
<dbReference type="SUPFAM" id="SSF56235">
    <property type="entry name" value="N-terminal nucleophile aminohydrolases (Ntn hydrolases)"/>
    <property type="match status" value="1"/>
</dbReference>
<dbReference type="PROSITE" id="PS51476">
    <property type="entry name" value="PROTEASOME_BETA_2"/>
    <property type="match status" value="1"/>
</dbReference>
<protein>
    <recommendedName>
        <fullName evidence="1">ATP-dependent protease subunit HslV</fullName>
        <ecNumber evidence="1">3.4.25.2</ecNumber>
    </recommendedName>
</protein>
<sequence>MFEGTTIVAVKRGGEVAIGGDGQVTFGQQTVIKRRANKIRKLYRGKVLAGFAGAVADAFTLFDLFEKKLEESQGNLTRAAVELVKTWRTDKFLRRLEAMLLVADRERILLISGTGEVIEPDDGVLAIGSGGNYALAAARALINHTNLSAREIVMESLKIAQEICVYTNDFITVETIGGE</sequence>
<accession>Q3AB73</accession>
<name>HSLV_CARHZ</name>